<gene>
    <name evidence="1" type="primary">aspS</name>
    <name type="ordered locus">Noca_2398</name>
</gene>
<feature type="chain" id="PRO_1000006717" description="Aspartate--tRNA(Asp/Asn) ligase">
    <location>
        <begin position="1"/>
        <end position="590"/>
    </location>
</feature>
<feature type="region of interest" description="Aspartate" evidence="1">
    <location>
        <begin position="193"/>
        <end position="196"/>
    </location>
</feature>
<feature type="region of interest" description="Disordered" evidence="2">
    <location>
        <begin position="556"/>
        <end position="590"/>
    </location>
</feature>
<feature type="binding site" evidence="1">
    <location>
        <position position="169"/>
    </location>
    <ligand>
        <name>L-aspartate</name>
        <dbReference type="ChEBI" id="CHEBI:29991"/>
    </ligand>
</feature>
<feature type="binding site" evidence="1">
    <location>
        <begin position="215"/>
        <end position="217"/>
    </location>
    <ligand>
        <name>ATP</name>
        <dbReference type="ChEBI" id="CHEBI:30616"/>
    </ligand>
</feature>
<feature type="binding site" evidence="1">
    <location>
        <position position="215"/>
    </location>
    <ligand>
        <name>L-aspartate</name>
        <dbReference type="ChEBI" id="CHEBI:29991"/>
    </ligand>
</feature>
<feature type="binding site" evidence="1">
    <location>
        <position position="224"/>
    </location>
    <ligand>
        <name>ATP</name>
        <dbReference type="ChEBI" id="CHEBI:30616"/>
    </ligand>
</feature>
<feature type="binding site" evidence="1">
    <location>
        <position position="447"/>
    </location>
    <ligand>
        <name>L-aspartate</name>
        <dbReference type="ChEBI" id="CHEBI:29991"/>
    </ligand>
</feature>
<feature type="binding site" evidence="1">
    <location>
        <position position="479"/>
    </location>
    <ligand>
        <name>ATP</name>
        <dbReference type="ChEBI" id="CHEBI:30616"/>
    </ligand>
</feature>
<feature type="binding site" evidence="1">
    <location>
        <position position="486"/>
    </location>
    <ligand>
        <name>L-aspartate</name>
        <dbReference type="ChEBI" id="CHEBI:29991"/>
    </ligand>
</feature>
<feature type="binding site" evidence="1">
    <location>
        <begin position="531"/>
        <end position="534"/>
    </location>
    <ligand>
        <name>ATP</name>
        <dbReference type="ChEBI" id="CHEBI:30616"/>
    </ligand>
</feature>
<feature type="site" description="Important for tRNA non-discrimination" evidence="1">
    <location>
        <position position="31"/>
    </location>
</feature>
<feature type="site" description="Important for tRNA non-discrimination" evidence="1">
    <location>
        <position position="77"/>
    </location>
</feature>
<evidence type="ECO:0000255" key="1">
    <source>
        <dbReference type="HAMAP-Rule" id="MF_00044"/>
    </source>
</evidence>
<evidence type="ECO:0000256" key="2">
    <source>
        <dbReference type="SAM" id="MobiDB-lite"/>
    </source>
</evidence>
<reference key="1">
    <citation type="submission" date="2006-12" db="EMBL/GenBank/DDBJ databases">
        <title>Complete sequence of chromosome 1 of Nocardioides sp. JS614.</title>
        <authorList>
            <person name="Copeland A."/>
            <person name="Lucas S."/>
            <person name="Lapidus A."/>
            <person name="Barry K."/>
            <person name="Detter J.C."/>
            <person name="Glavina del Rio T."/>
            <person name="Hammon N."/>
            <person name="Israni S."/>
            <person name="Dalin E."/>
            <person name="Tice H."/>
            <person name="Pitluck S."/>
            <person name="Thompson L.S."/>
            <person name="Brettin T."/>
            <person name="Bruce D."/>
            <person name="Han C."/>
            <person name="Tapia R."/>
            <person name="Schmutz J."/>
            <person name="Larimer F."/>
            <person name="Land M."/>
            <person name="Hauser L."/>
            <person name="Kyrpides N."/>
            <person name="Kim E."/>
            <person name="Mattes T."/>
            <person name="Gossett J."/>
            <person name="Richardson P."/>
        </authorList>
    </citation>
    <scope>NUCLEOTIDE SEQUENCE [LARGE SCALE GENOMIC DNA]</scope>
    <source>
        <strain>ATCC BAA-499 / JS614</strain>
    </source>
</reference>
<accession>A1SJB8</accession>
<comment type="function">
    <text evidence="1">Aspartyl-tRNA synthetase with relaxed tRNA specificity since it is able to aspartylate not only its cognate tRNA(Asp) but also tRNA(Asn). Reaction proceeds in two steps: L-aspartate is first activated by ATP to form Asp-AMP and then transferred to the acceptor end of tRNA(Asp/Asn).</text>
</comment>
<comment type="catalytic activity">
    <reaction evidence="1">
        <text>tRNA(Asx) + L-aspartate + ATP = L-aspartyl-tRNA(Asx) + AMP + diphosphate</text>
        <dbReference type="Rhea" id="RHEA:18349"/>
        <dbReference type="Rhea" id="RHEA-COMP:9710"/>
        <dbReference type="Rhea" id="RHEA-COMP:9711"/>
        <dbReference type="ChEBI" id="CHEBI:29991"/>
        <dbReference type="ChEBI" id="CHEBI:30616"/>
        <dbReference type="ChEBI" id="CHEBI:33019"/>
        <dbReference type="ChEBI" id="CHEBI:78442"/>
        <dbReference type="ChEBI" id="CHEBI:78516"/>
        <dbReference type="ChEBI" id="CHEBI:456215"/>
        <dbReference type="EC" id="6.1.1.23"/>
    </reaction>
</comment>
<comment type="subunit">
    <text evidence="1">Homodimer.</text>
</comment>
<comment type="subcellular location">
    <subcellularLocation>
        <location evidence="1">Cytoplasm</location>
    </subcellularLocation>
</comment>
<comment type="similarity">
    <text evidence="1">Belongs to the class-II aminoacyl-tRNA synthetase family. Type 1 subfamily.</text>
</comment>
<organism>
    <name type="scientific">Nocardioides sp. (strain ATCC BAA-499 / JS614)</name>
    <dbReference type="NCBI Taxonomy" id="196162"/>
    <lineage>
        <taxon>Bacteria</taxon>
        <taxon>Bacillati</taxon>
        <taxon>Actinomycetota</taxon>
        <taxon>Actinomycetes</taxon>
        <taxon>Propionibacteriales</taxon>
        <taxon>Nocardioidaceae</taxon>
        <taxon>Nocardioides</taxon>
    </lineage>
</organism>
<name>SYDND_NOCSJ</name>
<keyword id="KW-0030">Aminoacyl-tRNA synthetase</keyword>
<keyword id="KW-0067">ATP-binding</keyword>
<keyword id="KW-0963">Cytoplasm</keyword>
<keyword id="KW-0436">Ligase</keyword>
<keyword id="KW-0547">Nucleotide-binding</keyword>
<keyword id="KW-0648">Protein biosynthesis</keyword>
<keyword id="KW-1185">Reference proteome</keyword>
<sequence length="590" mass="64541">MIRTQDAGALRAENVGQTVTLAGWVANRRDHGGVAFIDLREASGVVQVVIRDEQVAHHLRAEYCLAVTGEVTRRKEGNENPNLATGEVEVVANEVEVLSAAAPLPFPISDHVDVGEEARLKHRYLDLRRSGPNNALRLRSKVNKAARDVLDRHDFVEIETPTLTRSTPEGARDFLVPARLQPGSWYALPQSPQLFKQLLMVAGMERYYQIARCYRDEDFRADRQPEFTQLDIEMSFVEQDDVLAVAEEVLVALWKLVGHDVPVPLPRMTYAESMERYGTDKPDLRMGQELVDCTAYFADTPFRVFQADYVGAVVMPGGASQPRKQLDAWQEWAKQRGAKGLAYVLVQDDGELTGPVSKNITDGESAGLAEHTGAKPGDCIFFAAGAPKPSRALLGAARLEIGRRCDLIDEDAWSFLWVVDAPLFEPTADATASGDVALGYSAWTAVHHAFTSPQDVDGFDADPGSALAWAYDIVCNGNEIGGGSIRIHREDVQKRVFAIMGIDEAEAQEKFGFLLEAFKYGAPPHGGIAFGWDRIVALLAGTESIRDVIAFPKSGGGFDPLTAAPAPITPEQRKEAGVDARPQQDLPPQS</sequence>
<proteinExistence type="inferred from homology"/>
<dbReference type="EC" id="6.1.1.23" evidence="1"/>
<dbReference type="EMBL" id="CP000509">
    <property type="protein sequence ID" value="ABL81903.1"/>
    <property type="molecule type" value="Genomic_DNA"/>
</dbReference>
<dbReference type="RefSeq" id="WP_011755844.1">
    <property type="nucleotide sequence ID" value="NC_008699.1"/>
</dbReference>
<dbReference type="SMR" id="A1SJB8"/>
<dbReference type="STRING" id="196162.Noca_2398"/>
<dbReference type="KEGG" id="nca:Noca_2398"/>
<dbReference type="eggNOG" id="COG0173">
    <property type="taxonomic scope" value="Bacteria"/>
</dbReference>
<dbReference type="HOGENOM" id="CLU_014330_3_2_11"/>
<dbReference type="OrthoDB" id="9802326at2"/>
<dbReference type="Proteomes" id="UP000000640">
    <property type="component" value="Chromosome"/>
</dbReference>
<dbReference type="GO" id="GO:0005737">
    <property type="term" value="C:cytoplasm"/>
    <property type="evidence" value="ECO:0007669"/>
    <property type="project" value="UniProtKB-SubCell"/>
</dbReference>
<dbReference type="GO" id="GO:0004815">
    <property type="term" value="F:aspartate-tRNA ligase activity"/>
    <property type="evidence" value="ECO:0007669"/>
    <property type="project" value="UniProtKB-UniRule"/>
</dbReference>
<dbReference type="GO" id="GO:0050560">
    <property type="term" value="F:aspartate-tRNA(Asn) ligase activity"/>
    <property type="evidence" value="ECO:0007669"/>
    <property type="project" value="UniProtKB-EC"/>
</dbReference>
<dbReference type="GO" id="GO:0005524">
    <property type="term" value="F:ATP binding"/>
    <property type="evidence" value="ECO:0007669"/>
    <property type="project" value="UniProtKB-UniRule"/>
</dbReference>
<dbReference type="GO" id="GO:0003676">
    <property type="term" value="F:nucleic acid binding"/>
    <property type="evidence" value="ECO:0007669"/>
    <property type="project" value="InterPro"/>
</dbReference>
<dbReference type="GO" id="GO:0006422">
    <property type="term" value="P:aspartyl-tRNA aminoacylation"/>
    <property type="evidence" value="ECO:0007669"/>
    <property type="project" value="UniProtKB-UniRule"/>
</dbReference>
<dbReference type="CDD" id="cd00777">
    <property type="entry name" value="AspRS_core"/>
    <property type="match status" value="1"/>
</dbReference>
<dbReference type="CDD" id="cd04317">
    <property type="entry name" value="EcAspRS_like_N"/>
    <property type="match status" value="1"/>
</dbReference>
<dbReference type="Gene3D" id="3.30.930.10">
    <property type="entry name" value="Bira Bifunctional Protein, Domain 2"/>
    <property type="match status" value="1"/>
</dbReference>
<dbReference type="Gene3D" id="3.30.1360.30">
    <property type="entry name" value="GAD-like domain"/>
    <property type="match status" value="1"/>
</dbReference>
<dbReference type="Gene3D" id="2.40.50.140">
    <property type="entry name" value="Nucleic acid-binding proteins"/>
    <property type="match status" value="1"/>
</dbReference>
<dbReference type="HAMAP" id="MF_00044">
    <property type="entry name" value="Asp_tRNA_synth_type1"/>
    <property type="match status" value="1"/>
</dbReference>
<dbReference type="InterPro" id="IPR004364">
    <property type="entry name" value="Aa-tRNA-synt_II"/>
</dbReference>
<dbReference type="InterPro" id="IPR006195">
    <property type="entry name" value="aa-tRNA-synth_II"/>
</dbReference>
<dbReference type="InterPro" id="IPR045864">
    <property type="entry name" value="aa-tRNA-synth_II/BPL/LPL"/>
</dbReference>
<dbReference type="InterPro" id="IPR004524">
    <property type="entry name" value="Asp-tRNA-ligase_1"/>
</dbReference>
<dbReference type="InterPro" id="IPR047089">
    <property type="entry name" value="Asp-tRNA-ligase_1_N"/>
</dbReference>
<dbReference type="InterPro" id="IPR002312">
    <property type="entry name" value="Asp/Asn-tRNA-synth_IIb"/>
</dbReference>
<dbReference type="InterPro" id="IPR047090">
    <property type="entry name" value="AspRS_core"/>
</dbReference>
<dbReference type="InterPro" id="IPR004115">
    <property type="entry name" value="GAD-like_sf"/>
</dbReference>
<dbReference type="InterPro" id="IPR029351">
    <property type="entry name" value="GAD_dom"/>
</dbReference>
<dbReference type="InterPro" id="IPR012340">
    <property type="entry name" value="NA-bd_OB-fold"/>
</dbReference>
<dbReference type="InterPro" id="IPR004365">
    <property type="entry name" value="NA-bd_OB_tRNA"/>
</dbReference>
<dbReference type="NCBIfam" id="TIGR00459">
    <property type="entry name" value="aspS_bact"/>
    <property type="match status" value="1"/>
</dbReference>
<dbReference type="NCBIfam" id="NF001750">
    <property type="entry name" value="PRK00476.1"/>
    <property type="match status" value="1"/>
</dbReference>
<dbReference type="PANTHER" id="PTHR22594:SF5">
    <property type="entry name" value="ASPARTATE--TRNA LIGASE, MITOCHONDRIAL"/>
    <property type="match status" value="1"/>
</dbReference>
<dbReference type="PANTHER" id="PTHR22594">
    <property type="entry name" value="ASPARTYL/LYSYL-TRNA SYNTHETASE"/>
    <property type="match status" value="1"/>
</dbReference>
<dbReference type="Pfam" id="PF02938">
    <property type="entry name" value="GAD"/>
    <property type="match status" value="1"/>
</dbReference>
<dbReference type="Pfam" id="PF00152">
    <property type="entry name" value="tRNA-synt_2"/>
    <property type="match status" value="1"/>
</dbReference>
<dbReference type="Pfam" id="PF01336">
    <property type="entry name" value="tRNA_anti-codon"/>
    <property type="match status" value="1"/>
</dbReference>
<dbReference type="PRINTS" id="PR01042">
    <property type="entry name" value="TRNASYNTHASP"/>
</dbReference>
<dbReference type="SUPFAM" id="SSF55681">
    <property type="entry name" value="Class II aaRS and biotin synthetases"/>
    <property type="match status" value="1"/>
</dbReference>
<dbReference type="SUPFAM" id="SSF55261">
    <property type="entry name" value="GAD domain-like"/>
    <property type="match status" value="1"/>
</dbReference>
<dbReference type="SUPFAM" id="SSF50249">
    <property type="entry name" value="Nucleic acid-binding proteins"/>
    <property type="match status" value="1"/>
</dbReference>
<dbReference type="PROSITE" id="PS50862">
    <property type="entry name" value="AA_TRNA_LIGASE_II"/>
    <property type="match status" value="1"/>
</dbReference>
<protein>
    <recommendedName>
        <fullName evidence="1">Aspartate--tRNA(Asp/Asn) ligase</fullName>
        <ecNumber evidence="1">6.1.1.23</ecNumber>
    </recommendedName>
    <alternativeName>
        <fullName evidence="1">Aspartyl-tRNA synthetase</fullName>
        <shortName evidence="1">AspRS</shortName>
    </alternativeName>
    <alternativeName>
        <fullName evidence="1">Non-discriminating aspartyl-tRNA synthetase</fullName>
        <shortName evidence="1">ND-AspRS</shortName>
    </alternativeName>
</protein>